<gene>
    <name type="primary">66</name>
</gene>
<feature type="chain" id="PRO_0000405717" description="Uncharacterized gene 66 protein">
    <location>
        <begin position="1"/>
        <end position="437"/>
    </location>
</feature>
<feature type="transmembrane region" description="Helical" evidence="1">
    <location>
        <begin position="102"/>
        <end position="122"/>
    </location>
</feature>
<feature type="transmembrane region" description="Helical" evidence="1">
    <location>
        <begin position="272"/>
        <end position="292"/>
    </location>
</feature>
<organismHost>
    <name type="scientific">Connochaetes taurinus</name>
    <name type="common">Blue wildebeest</name>
    <dbReference type="NCBI Taxonomy" id="9927"/>
</organismHost>
<sequence length="437" mass="49384">MPVMGCSVCSAFAELSRWAHGYPGGQTDAVAIEGDLWQLNLQILDVLEIDHASFVNFVFLGKGLTCIPWGTRGEFFTSWIQGLLERCSCPSVDIHKQLFYYGIYMCYFLTVYLLLYPSPVIIKYARSFFRGEQLWHLLCKFEWVIEKFMEYVFKINFNHPVIKINEGDLESYMFLRKKLKRQYLTPQLAVPPLFTRLPPSLQFIDEGHTHLDTHGEALASALKSCCEDVPCGSPFDSMVKNLALRCALSHQFSVIPVSDQSPNIVTQIREKILSISVLACVVRVPILSATVWSLVETKRPTFFVYCGECKHCLNFGKGKFLKVNFNPTHAFYCRDQKEKQCNVCATTGRIYCSFCGSADIHTASLTQMLDGVPIIRAVMANNAAFMLDTAQRSVDFILPCLGTHAKCEGSVLRRLSLLQLLYLTLNASELMCARCQS</sequence>
<accession>O36416</accession>
<protein>
    <recommendedName>
        <fullName>Uncharacterized gene 66 protein</fullName>
    </recommendedName>
</protein>
<organism>
    <name type="scientific">Alcelaphine herpesvirus 1 (strain C500)</name>
    <name type="common">AlHV-1</name>
    <name type="synonym">Malignant catarrhal fever virus</name>
    <dbReference type="NCBI Taxonomy" id="654901"/>
    <lineage>
        <taxon>Viruses</taxon>
        <taxon>Duplodnaviria</taxon>
        <taxon>Heunggongvirae</taxon>
        <taxon>Peploviricota</taxon>
        <taxon>Herviviricetes</taxon>
        <taxon>Herpesvirales</taxon>
        <taxon>Orthoherpesviridae</taxon>
        <taxon>Gammaherpesvirinae</taxon>
        <taxon>Macavirus</taxon>
        <taxon>Macavirus alcelaphinegamma1</taxon>
    </lineage>
</organism>
<evidence type="ECO:0000255" key="1"/>
<evidence type="ECO:0000305" key="2"/>
<reference key="1">
    <citation type="journal article" date="1997" name="J. Virol.">
        <title>Primary structure of the alcelaphine herpesvirus 1 genome.</title>
        <authorList>
            <person name="Ensser A."/>
            <person name="Pflanz R."/>
            <person name="Fleckenstein B."/>
        </authorList>
    </citation>
    <scope>NUCLEOTIDE SEQUENCE [LARGE SCALE GENOMIC DNA]</scope>
</reference>
<keyword id="KW-1043">Host membrane</keyword>
<keyword id="KW-0472">Membrane</keyword>
<keyword id="KW-1185">Reference proteome</keyword>
<keyword id="KW-0812">Transmembrane</keyword>
<keyword id="KW-1133">Transmembrane helix</keyword>
<name>UL49_ALHV1</name>
<dbReference type="EMBL" id="AF005370">
    <property type="protein sequence ID" value="AAC58113.1"/>
    <property type="molecule type" value="Genomic_DNA"/>
</dbReference>
<dbReference type="PIR" id="T03161">
    <property type="entry name" value="T03161"/>
</dbReference>
<dbReference type="RefSeq" id="NP_065565.1">
    <property type="nucleotide sequence ID" value="NC_002531.1"/>
</dbReference>
<dbReference type="KEGG" id="vg:911804"/>
<dbReference type="Proteomes" id="UP000000941">
    <property type="component" value="Segment"/>
</dbReference>
<dbReference type="GO" id="GO:0033644">
    <property type="term" value="C:host cell membrane"/>
    <property type="evidence" value="ECO:0007669"/>
    <property type="project" value="UniProtKB-SubCell"/>
</dbReference>
<dbReference type="GO" id="GO:0016020">
    <property type="term" value="C:membrane"/>
    <property type="evidence" value="ECO:0007669"/>
    <property type="project" value="UniProtKB-KW"/>
</dbReference>
<dbReference type="GO" id="GO:0019033">
    <property type="term" value="C:viral tegument"/>
    <property type="evidence" value="ECO:0007669"/>
    <property type="project" value="InterPro"/>
</dbReference>
<dbReference type="GO" id="GO:0016032">
    <property type="term" value="P:viral process"/>
    <property type="evidence" value="ECO:0007669"/>
    <property type="project" value="InterPro"/>
</dbReference>
<dbReference type="InterPro" id="IPR004339">
    <property type="entry name" value="UL49"/>
</dbReference>
<dbReference type="Pfam" id="PF03117">
    <property type="entry name" value="Herpes_UL49_1"/>
    <property type="match status" value="1"/>
</dbReference>
<proteinExistence type="inferred from homology"/>
<comment type="subcellular location">
    <subcellularLocation>
        <location evidence="2">Host membrane</location>
        <topology evidence="2">Multi-pass membrane protein</topology>
    </subcellularLocation>
</comment>
<comment type="similarity">
    <text evidence="2">Belongs to the herpesviridae UL49 family.</text>
</comment>